<evidence type="ECO:0000255" key="1">
    <source>
        <dbReference type="HAMAP-Rule" id="MF_00203"/>
    </source>
</evidence>
<keyword id="KW-0963">Cytoplasm</keyword>
<keyword id="KW-0227">DNA damage</keyword>
<keyword id="KW-0228">DNA excision</keyword>
<keyword id="KW-0234">DNA repair</keyword>
<keyword id="KW-0267">Excision nuclease</keyword>
<keyword id="KW-0742">SOS response</keyword>
<gene>
    <name evidence="1" type="primary">uvrC</name>
    <name type="ordered locus">CAB799</name>
</gene>
<accession>Q5L553</accession>
<dbReference type="EMBL" id="CR848038">
    <property type="protein sequence ID" value="CAH64241.1"/>
    <property type="molecule type" value="Genomic_DNA"/>
</dbReference>
<dbReference type="RefSeq" id="WP_011097338.1">
    <property type="nucleotide sequence ID" value="NC_004552.2"/>
</dbReference>
<dbReference type="SMR" id="Q5L553"/>
<dbReference type="KEGG" id="cab:CAB799"/>
<dbReference type="eggNOG" id="COG0322">
    <property type="taxonomic scope" value="Bacteria"/>
</dbReference>
<dbReference type="HOGENOM" id="CLU_014841_3_2_0"/>
<dbReference type="OrthoDB" id="9804933at2"/>
<dbReference type="Proteomes" id="UP000001012">
    <property type="component" value="Chromosome"/>
</dbReference>
<dbReference type="GO" id="GO:0005737">
    <property type="term" value="C:cytoplasm"/>
    <property type="evidence" value="ECO:0007669"/>
    <property type="project" value="UniProtKB-SubCell"/>
</dbReference>
<dbReference type="GO" id="GO:0009380">
    <property type="term" value="C:excinuclease repair complex"/>
    <property type="evidence" value="ECO:0007669"/>
    <property type="project" value="InterPro"/>
</dbReference>
<dbReference type="GO" id="GO:0003677">
    <property type="term" value="F:DNA binding"/>
    <property type="evidence" value="ECO:0007669"/>
    <property type="project" value="UniProtKB-UniRule"/>
</dbReference>
<dbReference type="GO" id="GO:0009381">
    <property type="term" value="F:excinuclease ABC activity"/>
    <property type="evidence" value="ECO:0007669"/>
    <property type="project" value="UniProtKB-UniRule"/>
</dbReference>
<dbReference type="GO" id="GO:0006289">
    <property type="term" value="P:nucleotide-excision repair"/>
    <property type="evidence" value="ECO:0007669"/>
    <property type="project" value="UniProtKB-UniRule"/>
</dbReference>
<dbReference type="GO" id="GO:0009432">
    <property type="term" value="P:SOS response"/>
    <property type="evidence" value="ECO:0007669"/>
    <property type="project" value="UniProtKB-UniRule"/>
</dbReference>
<dbReference type="CDD" id="cd10434">
    <property type="entry name" value="GIY-YIG_UvrC_Cho"/>
    <property type="match status" value="1"/>
</dbReference>
<dbReference type="FunFam" id="3.40.1440.10:FF:000001">
    <property type="entry name" value="UvrABC system protein C"/>
    <property type="match status" value="1"/>
</dbReference>
<dbReference type="Gene3D" id="1.10.150.20">
    <property type="entry name" value="5' to 3' exonuclease, C-terminal subdomain"/>
    <property type="match status" value="1"/>
</dbReference>
<dbReference type="Gene3D" id="3.40.1440.10">
    <property type="entry name" value="GIY-YIG endonuclease"/>
    <property type="match status" value="1"/>
</dbReference>
<dbReference type="Gene3D" id="3.30.420.340">
    <property type="entry name" value="UvrC, RNAse H endonuclease domain"/>
    <property type="match status" value="1"/>
</dbReference>
<dbReference type="HAMAP" id="MF_00203">
    <property type="entry name" value="UvrC"/>
    <property type="match status" value="1"/>
</dbReference>
<dbReference type="InterPro" id="IPR000305">
    <property type="entry name" value="GIY-YIG_endonuc"/>
</dbReference>
<dbReference type="InterPro" id="IPR035901">
    <property type="entry name" value="GIY-YIG_endonuc_sf"/>
</dbReference>
<dbReference type="InterPro" id="IPR047296">
    <property type="entry name" value="GIY-YIG_UvrC_Cho"/>
</dbReference>
<dbReference type="InterPro" id="IPR010994">
    <property type="entry name" value="RuvA_2-like"/>
</dbReference>
<dbReference type="InterPro" id="IPR001943">
    <property type="entry name" value="UVR_dom"/>
</dbReference>
<dbReference type="InterPro" id="IPR036876">
    <property type="entry name" value="UVR_dom_sf"/>
</dbReference>
<dbReference type="InterPro" id="IPR050066">
    <property type="entry name" value="UvrABC_protein_C"/>
</dbReference>
<dbReference type="InterPro" id="IPR004791">
    <property type="entry name" value="UvrC"/>
</dbReference>
<dbReference type="InterPro" id="IPR001162">
    <property type="entry name" value="UvrC_RNase_H_dom"/>
</dbReference>
<dbReference type="InterPro" id="IPR038476">
    <property type="entry name" value="UvrC_RNase_H_dom_sf"/>
</dbReference>
<dbReference type="NCBIfam" id="TIGR00194">
    <property type="entry name" value="uvrC"/>
    <property type="match status" value="1"/>
</dbReference>
<dbReference type="PANTHER" id="PTHR30562:SF1">
    <property type="entry name" value="UVRABC SYSTEM PROTEIN C"/>
    <property type="match status" value="1"/>
</dbReference>
<dbReference type="PANTHER" id="PTHR30562">
    <property type="entry name" value="UVRC/OXIDOREDUCTASE"/>
    <property type="match status" value="1"/>
</dbReference>
<dbReference type="Pfam" id="PF01541">
    <property type="entry name" value="GIY-YIG"/>
    <property type="match status" value="1"/>
</dbReference>
<dbReference type="Pfam" id="PF22920">
    <property type="entry name" value="UvrC_RNaseH"/>
    <property type="match status" value="1"/>
</dbReference>
<dbReference type="Pfam" id="PF08459">
    <property type="entry name" value="UvrC_RNaseH_dom"/>
    <property type="match status" value="1"/>
</dbReference>
<dbReference type="SMART" id="SM00465">
    <property type="entry name" value="GIYc"/>
    <property type="match status" value="1"/>
</dbReference>
<dbReference type="SUPFAM" id="SSF46600">
    <property type="entry name" value="C-terminal UvrC-binding domain of UvrB"/>
    <property type="match status" value="1"/>
</dbReference>
<dbReference type="SUPFAM" id="SSF82771">
    <property type="entry name" value="GIY-YIG endonuclease"/>
    <property type="match status" value="1"/>
</dbReference>
<dbReference type="SUPFAM" id="SSF47781">
    <property type="entry name" value="RuvA domain 2-like"/>
    <property type="match status" value="1"/>
</dbReference>
<dbReference type="PROSITE" id="PS50164">
    <property type="entry name" value="GIY_YIG"/>
    <property type="match status" value="1"/>
</dbReference>
<dbReference type="PROSITE" id="PS50151">
    <property type="entry name" value="UVR"/>
    <property type="match status" value="1"/>
</dbReference>
<dbReference type="PROSITE" id="PS50165">
    <property type="entry name" value="UVRC"/>
    <property type="match status" value="1"/>
</dbReference>
<protein>
    <recommendedName>
        <fullName evidence="1">UvrABC system protein C</fullName>
        <shortName evidence="1">Protein UvrC</shortName>
    </recommendedName>
    <alternativeName>
        <fullName evidence="1">Excinuclease ABC subunit C</fullName>
    </alternativeName>
</protein>
<reference key="1">
    <citation type="journal article" date="2005" name="Genome Res.">
        <title>The Chlamydophila abortus genome sequence reveals an array of variable proteins that contribute to interspecies variation.</title>
        <authorList>
            <person name="Thomson N.R."/>
            <person name="Yeats C."/>
            <person name="Bell K."/>
            <person name="Holden M.T.G."/>
            <person name="Bentley S.D."/>
            <person name="Livingstone M."/>
            <person name="Cerdeno-Tarraga A.-M."/>
            <person name="Harris B."/>
            <person name="Doggett J."/>
            <person name="Ormond D."/>
            <person name="Mungall K."/>
            <person name="Clarke K."/>
            <person name="Feltwell T."/>
            <person name="Hance Z."/>
            <person name="Sanders M."/>
            <person name="Quail M.A."/>
            <person name="Price C."/>
            <person name="Barrell B.G."/>
            <person name="Parkhill J."/>
            <person name="Longbottom D."/>
        </authorList>
    </citation>
    <scope>NUCLEOTIDE SEQUENCE [LARGE SCALE GENOMIC DNA]</scope>
    <source>
        <strain>DSM 27085 / S26/3</strain>
    </source>
</reference>
<comment type="function">
    <text evidence="1">The UvrABC repair system catalyzes the recognition and processing of DNA lesions. UvrC both incises the 5' and 3' sides of the lesion. The N-terminal half is responsible for the 3' incision and the C-terminal half is responsible for the 5' incision.</text>
</comment>
<comment type="subunit">
    <text evidence="1">Interacts with UvrB in an incision complex.</text>
</comment>
<comment type="subcellular location">
    <subcellularLocation>
        <location evidence="1">Cytoplasm</location>
    </subcellularLocation>
</comment>
<comment type="similarity">
    <text evidence="1">Belongs to the UvrC family.</text>
</comment>
<sequence length="604" mass="69264">MRVEDFTPKLIPASPGVYLMKDSSGEVLYIGKAKNLRNRISTYFRKDGDSRERIPFLMKKTTDIETILVSNETEAFLLENNLIKKYHPKYNVLLKDDKTFFCLAISLTHLWPKIDVVRTKAVTSSKKQIIFGPYVSAEACRTLLEVISQWFPLRTCSNREFASRKRPCILYEMKRCLAPCVNLCSHEEYEQTLDKAVLFLKGQISEIVQDLEKSIEKASKEQKFEQAGMYYRTLKLIQQAMEKQHVEKFHFQNIDAIGLYRKYQKTVITVLTIRSGKLLGARHFPFSENAQEDADVLSSFILQYYTNQPQTPKEILTPIPLNIPDLPSLLNKDTPPQLRSPKTGYGRELLNLAKNNAQVHAETTIQSSALPYEELKKILKSPDYPYRIECYDNAHLQGSHAVGVYIVYENDALSPKDYRTFSISSSAYNDLAAFHEVLSRRFISLTSSIPDMILIDGGRTQYAQAKKTLKELNLTGIQVVSIAKEAGNHSGSLKNEKLFCDTFPQGVLLPPTSKLLQFFQKLRDEAHRFALSRHRKKRHKDFLLPKEKIPGIGEIKRKRLLQKFKSWEQVMKASQGELEAIPGLTKKDIQHVLAKQAEDTYLED</sequence>
<name>UVRC_CHLAB</name>
<organism>
    <name type="scientific">Chlamydia abortus (strain DSM 27085 / S26/3)</name>
    <name type="common">Chlamydophila abortus</name>
    <dbReference type="NCBI Taxonomy" id="218497"/>
    <lineage>
        <taxon>Bacteria</taxon>
        <taxon>Pseudomonadati</taxon>
        <taxon>Chlamydiota</taxon>
        <taxon>Chlamydiia</taxon>
        <taxon>Chlamydiales</taxon>
        <taxon>Chlamydiaceae</taxon>
        <taxon>Chlamydia/Chlamydophila group</taxon>
        <taxon>Chlamydia</taxon>
    </lineage>
</organism>
<proteinExistence type="inferred from homology"/>
<feature type="chain" id="PRO_0000227413" description="UvrABC system protein C">
    <location>
        <begin position="1"/>
        <end position="604"/>
    </location>
</feature>
<feature type="domain" description="GIY-YIG" evidence="1">
    <location>
        <begin position="13"/>
        <end position="92"/>
    </location>
</feature>
<feature type="domain" description="UVR" evidence="1">
    <location>
        <begin position="205"/>
        <end position="240"/>
    </location>
</feature>